<feature type="chain" id="PRO_0000304120" description="Uncharacterized protein C664.13">
    <location>
        <begin position="1"/>
        <end position="117"/>
    </location>
</feature>
<evidence type="ECO:0000269" key="1">
    <source>
    </source>
</evidence>
<name>YIRD_SCHPO</name>
<accession>Q9US01</accession>
<keyword id="KW-0963">Cytoplasm</keyword>
<keyword id="KW-0539">Nucleus</keyword>
<keyword id="KW-1185">Reference proteome</keyword>
<proteinExistence type="predicted"/>
<gene>
    <name type="ORF">SPAC664.13</name>
</gene>
<protein>
    <recommendedName>
        <fullName>Uncharacterized protein C664.13</fullName>
    </recommendedName>
</protein>
<reference key="1">
    <citation type="journal article" date="2002" name="Nature">
        <title>The genome sequence of Schizosaccharomyces pombe.</title>
        <authorList>
            <person name="Wood V."/>
            <person name="Gwilliam R."/>
            <person name="Rajandream M.A."/>
            <person name="Lyne M.H."/>
            <person name="Lyne R."/>
            <person name="Stewart A."/>
            <person name="Sgouros J.G."/>
            <person name="Peat N."/>
            <person name="Hayles J."/>
            <person name="Baker S.G."/>
            <person name="Basham D."/>
            <person name="Bowman S."/>
            <person name="Brooks K."/>
            <person name="Brown D."/>
            <person name="Brown S."/>
            <person name="Chillingworth T."/>
            <person name="Churcher C.M."/>
            <person name="Collins M."/>
            <person name="Connor R."/>
            <person name="Cronin A."/>
            <person name="Davis P."/>
            <person name="Feltwell T."/>
            <person name="Fraser A."/>
            <person name="Gentles S."/>
            <person name="Goble A."/>
            <person name="Hamlin N."/>
            <person name="Harris D.E."/>
            <person name="Hidalgo J."/>
            <person name="Hodgson G."/>
            <person name="Holroyd S."/>
            <person name="Hornsby T."/>
            <person name="Howarth S."/>
            <person name="Huckle E.J."/>
            <person name="Hunt S."/>
            <person name="Jagels K."/>
            <person name="James K.D."/>
            <person name="Jones L."/>
            <person name="Jones M."/>
            <person name="Leather S."/>
            <person name="McDonald S."/>
            <person name="McLean J."/>
            <person name="Mooney P."/>
            <person name="Moule S."/>
            <person name="Mungall K.L."/>
            <person name="Murphy L.D."/>
            <person name="Niblett D."/>
            <person name="Odell C."/>
            <person name="Oliver K."/>
            <person name="O'Neil S."/>
            <person name="Pearson D."/>
            <person name="Quail M.A."/>
            <person name="Rabbinowitsch E."/>
            <person name="Rutherford K.M."/>
            <person name="Rutter S."/>
            <person name="Saunders D."/>
            <person name="Seeger K."/>
            <person name="Sharp S."/>
            <person name="Skelton J."/>
            <person name="Simmonds M.N."/>
            <person name="Squares R."/>
            <person name="Squares S."/>
            <person name="Stevens K."/>
            <person name="Taylor K."/>
            <person name="Taylor R.G."/>
            <person name="Tivey A."/>
            <person name="Walsh S.V."/>
            <person name="Warren T."/>
            <person name="Whitehead S."/>
            <person name="Woodward J.R."/>
            <person name="Volckaert G."/>
            <person name="Aert R."/>
            <person name="Robben J."/>
            <person name="Grymonprez B."/>
            <person name="Weltjens I."/>
            <person name="Vanstreels E."/>
            <person name="Rieger M."/>
            <person name="Schaefer M."/>
            <person name="Mueller-Auer S."/>
            <person name="Gabel C."/>
            <person name="Fuchs M."/>
            <person name="Duesterhoeft A."/>
            <person name="Fritzc C."/>
            <person name="Holzer E."/>
            <person name="Moestl D."/>
            <person name="Hilbert H."/>
            <person name="Borzym K."/>
            <person name="Langer I."/>
            <person name="Beck A."/>
            <person name="Lehrach H."/>
            <person name="Reinhardt R."/>
            <person name="Pohl T.M."/>
            <person name="Eger P."/>
            <person name="Zimmermann W."/>
            <person name="Wedler H."/>
            <person name="Wambutt R."/>
            <person name="Purnelle B."/>
            <person name="Goffeau A."/>
            <person name="Cadieu E."/>
            <person name="Dreano S."/>
            <person name="Gloux S."/>
            <person name="Lelaure V."/>
            <person name="Mottier S."/>
            <person name="Galibert F."/>
            <person name="Aves S.J."/>
            <person name="Xiang Z."/>
            <person name="Hunt C."/>
            <person name="Moore K."/>
            <person name="Hurst S.M."/>
            <person name="Lucas M."/>
            <person name="Rochet M."/>
            <person name="Gaillardin C."/>
            <person name="Tallada V.A."/>
            <person name="Garzon A."/>
            <person name="Thode G."/>
            <person name="Daga R.R."/>
            <person name="Cruzado L."/>
            <person name="Jimenez J."/>
            <person name="Sanchez M."/>
            <person name="del Rey F."/>
            <person name="Benito J."/>
            <person name="Dominguez A."/>
            <person name="Revuelta J.L."/>
            <person name="Moreno S."/>
            <person name="Armstrong J."/>
            <person name="Forsburg S.L."/>
            <person name="Cerutti L."/>
            <person name="Lowe T."/>
            <person name="McCombie W.R."/>
            <person name="Paulsen I."/>
            <person name="Potashkin J."/>
            <person name="Shpakovski G.V."/>
            <person name="Ussery D."/>
            <person name="Barrell B.G."/>
            <person name="Nurse P."/>
        </authorList>
    </citation>
    <scope>NUCLEOTIDE SEQUENCE [LARGE SCALE GENOMIC DNA]</scope>
    <source>
        <strain>972 / ATCC 24843</strain>
    </source>
</reference>
<reference key="2">
    <citation type="journal article" date="2006" name="Nat. Biotechnol.">
        <title>ORFeome cloning and global analysis of protein localization in the fission yeast Schizosaccharomyces pombe.</title>
        <authorList>
            <person name="Matsuyama A."/>
            <person name="Arai R."/>
            <person name="Yashiroda Y."/>
            <person name="Shirai A."/>
            <person name="Kamata A."/>
            <person name="Sekido S."/>
            <person name="Kobayashi Y."/>
            <person name="Hashimoto A."/>
            <person name="Hamamoto M."/>
            <person name="Hiraoka Y."/>
            <person name="Horinouchi S."/>
            <person name="Yoshida M."/>
        </authorList>
    </citation>
    <scope>SUBCELLULAR LOCATION [LARGE SCALE ANALYSIS]</scope>
</reference>
<sequence>MDLEELQKIIQEEQIRCEREIAEAAEARNSSNSLIVVDEYSKESEDVLENGLEHVQSNEFTESEDYKSIERSLAVTEAVMARFEKEMGSLRDQMNFFHQILDNDNLDGFLTGSSKPC</sequence>
<comment type="subcellular location">
    <subcellularLocation>
        <location evidence="1">Cytoplasm</location>
    </subcellularLocation>
    <subcellularLocation>
        <location evidence="1">Nucleus</location>
    </subcellularLocation>
</comment>
<dbReference type="EMBL" id="CU329670">
    <property type="protein sequence ID" value="CAB65814.1"/>
    <property type="molecule type" value="Genomic_DNA"/>
</dbReference>
<dbReference type="PIR" id="T50243">
    <property type="entry name" value="T50243"/>
</dbReference>
<dbReference type="RefSeq" id="NP_593461.1">
    <property type="nucleotide sequence ID" value="NM_001018894.1"/>
</dbReference>
<dbReference type="SMR" id="Q9US01"/>
<dbReference type="BioGRID" id="279787">
    <property type="interactions" value="1"/>
</dbReference>
<dbReference type="iPTMnet" id="Q9US01"/>
<dbReference type="PaxDb" id="4896-SPAC664.13.1"/>
<dbReference type="EnsemblFungi" id="SPAC664.13.1">
    <property type="protein sequence ID" value="SPAC664.13.1:pep"/>
    <property type="gene ID" value="SPAC664.13"/>
</dbReference>
<dbReference type="KEGG" id="spo:2543365"/>
<dbReference type="PomBase" id="SPAC664.13"/>
<dbReference type="VEuPathDB" id="FungiDB:SPAC664.13"/>
<dbReference type="HOGENOM" id="CLU_2086173_0_0_1"/>
<dbReference type="InParanoid" id="Q9US01"/>
<dbReference type="PRO" id="PR:Q9US01"/>
<dbReference type="Proteomes" id="UP000002485">
    <property type="component" value="Chromosome I"/>
</dbReference>
<dbReference type="GO" id="GO:0005829">
    <property type="term" value="C:cytosol"/>
    <property type="evidence" value="ECO:0007005"/>
    <property type="project" value="PomBase"/>
</dbReference>
<dbReference type="GO" id="GO:0005634">
    <property type="term" value="C:nucleus"/>
    <property type="evidence" value="ECO:0007005"/>
    <property type="project" value="PomBase"/>
</dbReference>
<organism>
    <name type="scientific">Schizosaccharomyces pombe (strain 972 / ATCC 24843)</name>
    <name type="common">Fission yeast</name>
    <dbReference type="NCBI Taxonomy" id="284812"/>
    <lineage>
        <taxon>Eukaryota</taxon>
        <taxon>Fungi</taxon>
        <taxon>Dikarya</taxon>
        <taxon>Ascomycota</taxon>
        <taxon>Taphrinomycotina</taxon>
        <taxon>Schizosaccharomycetes</taxon>
        <taxon>Schizosaccharomycetales</taxon>
        <taxon>Schizosaccharomycetaceae</taxon>
        <taxon>Schizosaccharomyces</taxon>
    </lineage>
</organism>